<sequence>WPPVEDRPCCERCTACTLMLPDEANTCVCGDIVPKCHQGCSLCERVDTPSGYQCKSFEYYNCGTKCP</sequence>
<accession>C0HLS7</accession>
<comment type="function">
    <text evidence="2">Serine protease inhibitor (PubMed:33666645). Strongly inhibits trypsin (Ki = 4 nM) and elastase (Ki = 4.8 nM) (PubMed:33666645). Also inhibits chymotrypsin with a Ki of 22 nM (PubMed:33666645). Does not inhibit bacterial subtilisin (PubMed:33666645).</text>
</comment>
<comment type="tissue specificity">
    <text evidence="2">Expressed in bulb (at protein level).</text>
</comment>
<comment type="similarity">
    <text evidence="4">Belongs to the Bowman-Birk serine protease inhibitor family.</text>
</comment>
<protein>
    <recommendedName>
        <fullName evidence="3">Bowman-Birk type proteinase inhibitor A6</fullName>
        <shortName evidence="3">HOSPI-A6</shortName>
    </recommendedName>
</protein>
<organism>
    <name type="scientific">Hyacinthus orientalis</name>
    <name type="common">Common hyacinth</name>
    <dbReference type="NCBI Taxonomy" id="82025"/>
    <lineage>
        <taxon>Eukaryota</taxon>
        <taxon>Viridiplantae</taxon>
        <taxon>Streptophyta</taxon>
        <taxon>Embryophyta</taxon>
        <taxon>Tracheophyta</taxon>
        <taxon>Spermatophyta</taxon>
        <taxon>Magnoliopsida</taxon>
        <taxon>Liliopsida</taxon>
        <taxon>Asparagales</taxon>
        <taxon>Hyacinthaceae</taxon>
        <taxon>Hyacinthoideae</taxon>
        <taxon>Hyacintheae</taxon>
        <taxon>Hyacinthus</taxon>
    </lineage>
</organism>
<evidence type="ECO:0000250" key="1">
    <source>
        <dbReference type="UniProtKB" id="P80321"/>
    </source>
</evidence>
<evidence type="ECO:0000269" key="2">
    <source>
    </source>
</evidence>
<evidence type="ECO:0000303" key="3">
    <source>
    </source>
</evidence>
<evidence type="ECO:0000305" key="4"/>
<keyword id="KW-0903">Direct protein sequencing</keyword>
<keyword id="KW-1015">Disulfide bond</keyword>
<keyword id="KW-0646">Protease inhibitor</keyword>
<keyword id="KW-0722">Serine protease inhibitor</keyword>
<feature type="chain" id="PRO_0000452977" description="Bowman-Birk type proteinase inhibitor A6">
    <location>
        <begin position="1"/>
        <end position="67"/>
    </location>
</feature>
<feature type="site" description="Reactive bond for trypsin" evidence="1">
    <location>
        <begin position="18"/>
        <end position="19"/>
    </location>
</feature>
<feature type="disulfide bond" evidence="1">
    <location>
        <begin position="9"/>
        <end position="66"/>
    </location>
</feature>
<feature type="disulfide bond" evidence="1">
    <location>
        <begin position="10"/>
        <end position="29"/>
    </location>
</feature>
<feature type="disulfide bond" evidence="1">
    <location>
        <begin position="13"/>
        <end position="62"/>
    </location>
</feature>
<feature type="disulfide bond" evidence="1">
    <location>
        <begin position="16"/>
        <end position="27"/>
    </location>
</feature>
<feature type="disulfide bond" evidence="1">
    <location>
        <begin position="36"/>
        <end position="43"/>
    </location>
</feature>
<feature type="disulfide bond" evidence="1">
    <location>
        <begin position="40"/>
        <end position="54"/>
    </location>
</feature>
<proteinExistence type="evidence at protein level"/>
<reference key="1">
    <citation type="journal article" date="2021" name="Biochem. J.">
        <title>Isolation and functional diversity of Bowman-Birk type serine proteinase inhibitors from Hyacinthus orientalis.</title>
        <authorList>
            <person name="Aoki-Shioi N."/>
            <person name="Terada S."/>
            <person name="Hellinger R."/>
            <person name="Furuta Y."/>
            <person name="Gruber C.W."/>
        </authorList>
    </citation>
    <scope>PROTEIN SEQUENCE</scope>
    <scope>FUNCTION</scope>
    <scope>TISSUE SPECIFICITY</scope>
    <source>
        <tissue evidence="3">Bulb</tissue>
    </source>
</reference>
<dbReference type="SMR" id="C0HLS7"/>
<dbReference type="GO" id="GO:0005576">
    <property type="term" value="C:extracellular region"/>
    <property type="evidence" value="ECO:0007669"/>
    <property type="project" value="InterPro"/>
</dbReference>
<dbReference type="GO" id="GO:0004867">
    <property type="term" value="F:serine-type endopeptidase inhibitor activity"/>
    <property type="evidence" value="ECO:0000314"/>
    <property type="project" value="UniProtKB"/>
</dbReference>
<dbReference type="GO" id="GO:0010951">
    <property type="term" value="P:negative regulation of endopeptidase activity"/>
    <property type="evidence" value="ECO:0000314"/>
    <property type="project" value="UniProtKB"/>
</dbReference>
<dbReference type="Gene3D" id="2.10.69.10">
    <property type="entry name" value="Cysteine Protease (Bromelain) Inhibitor, subunit H"/>
    <property type="match status" value="1"/>
</dbReference>
<dbReference type="InterPro" id="IPR035995">
    <property type="entry name" value="Bowman-Birk_prot_inh"/>
</dbReference>
<dbReference type="InterPro" id="IPR000877">
    <property type="entry name" value="Prot_inh_BBI"/>
</dbReference>
<dbReference type="SMART" id="SM00269">
    <property type="entry name" value="BowB"/>
    <property type="match status" value="1"/>
</dbReference>
<name>IBBA6_HYAOR</name>